<name>THOC7_HUMAN</name>
<proteinExistence type="evidence at protein level"/>
<dbReference type="EMBL" id="AK027098">
    <property type="protein sequence ID" value="BAB15656.1"/>
    <property type="molecule type" value="mRNA"/>
</dbReference>
<dbReference type="EMBL" id="CR457373">
    <property type="protein sequence ID" value="CAG33654.1"/>
    <property type="molecule type" value="mRNA"/>
</dbReference>
<dbReference type="EMBL" id="AC104162">
    <property type="status" value="NOT_ANNOTATED_CDS"/>
    <property type="molecule type" value="Genomic_DNA"/>
</dbReference>
<dbReference type="EMBL" id="CH471055">
    <property type="protein sequence ID" value="EAW65418.1"/>
    <property type="molecule type" value="Genomic_DNA"/>
</dbReference>
<dbReference type="EMBL" id="BC020599">
    <property type="protein sequence ID" value="AAH20599.2"/>
    <property type="molecule type" value="mRNA"/>
</dbReference>
<dbReference type="EMBL" id="BC065012">
    <property type="protein sequence ID" value="AAH65012.1"/>
    <property type="molecule type" value="mRNA"/>
</dbReference>
<dbReference type="CCDS" id="CCDS2900.1"/>
<dbReference type="RefSeq" id="NP_001272333.1">
    <property type="nucleotide sequence ID" value="NM_001285404.1"/>
</dbReference>
<dbReference type="RefSeq" id="NP_079351.2">
    <property type="nucleotide sequence ID" value="NM_025075.4"/>
</dbReference>
<dbReference type="PDB" id="7APK">
    <property type="method" value="EM"/>
    <property type="resolution" value="3.30 A"/>
    <property type="chains" value="G/O/g/o=1-204"/>
</dbReference>
<dbReference type="PDB" id="7ZNK">
    <property type="method" value="EM"/>
    <property type="resolution" value="3.90 A"/>
    <property type="chains" value="G/O/g/o=1-204"/>
</dbReference>
<dbReference type="PDB" id="7ZNL">
    <property type="method" value="EM"/>
    <property type="resolution" value="3.45 A"/>
    <property type="chains" value="G/O/g/o=1-204"/>
</dbReference>
<dbReference type="PDBsum" id="7APK"/>
<dbReference type="PDBsum" id="7ZNK"/>
<dbReference type="PDBsum" id="7ZNL"/>
<dbReference type="EMDB" id="EMD-11857"/>
<dbReference type="EMDB" id="EMD-14804"/>
<dbReference type="EMDB" id="EMD-14808"/>
<dbReference type="SMR" id="Q6I9Y2"/>
<dbReference type="BioGRID" id="123138">
    <property type="interactions" value="127"/>
</dbReference>
<dbReference type="ComplexPortal" id="CPX-2488">
    <property type="entry name" value="TREX transcription-export complex, DX39B variant"/>
</dbReference>
<dbReference type="ComplexPortal" id="CPX-7261">
    <property type="entry name" value="TREX transcription-export complex, DX39A variant"/>
</dbReference>
<dbReference type="CORUM" id="Q6I9Y2"/>
<dbReference type="FunCoup" id="Q6I9Y2">
    <property type="interactions" value="2712"/>
</dbReference>
<dbReference type="IntAct" id="Q6I9Y2">
    <property type="interactions" value="82"/>
</dbReference>
<dbReference type="MINT" id="Q6I9Y2"/>
<dbReference type="STRING" id="9606.ENSP00000295899"/>
<dbReference type="TCDB" id="3.A.22.1.2">
    <property type="family name" value="the transcription-coupled trex/tap nuclear mrna export complex (trex) family"/>
</dbReference>
<dbReference type="iPTMnet" id="Q6I9Y2"/>
<dbReference type="PhosphoSitePlus" id="Q6I9Y2"/>
<dbReference type="BioMuta" id="THOC7"/>
<dbReference type="DMDM" id="229462996"/>
<dbReference type="jPOST" id="Q6I9Y2"/>
<dbReference type="MassIVE" id="Q6I9Y2"/>
<dbReference type="PaxDb" id="9606-ENSP00000295899"/>
<dbReference type="PeptideAtlas" id="Q6I9Y2"/>
<dbReference type="ProteomicsDB" id="66355"/>
<dbReference type="Pumba" id="Q6I9Y2"/>
<dbReference type="Antibodypedia" id="46357">
    <property type="antibodies" value="122 antibodies from 23 providers"/>
</dbReference>
<dbReference type="DNASU" id="80145"/>
<dbReference type="Ensembl" id="ENST00000295899.10">
    <property type="protein sequence ID" value="ENSP00000295899.5"/>
    <property type="gene ID" value="ENSG00000163634.12"/>
</dbReference>
<dbReference type="GeneID" id="80145"/>
<dbReference type="KEGG" id="hsa:80145"/>
<dbReference type="MANE-Select" id="ENST00000295899.10">
    <property type="protein sequence ID" value="ENSP00000295899.5"/>
    <property type="RefSeq nucleotide sequence ID" value="NM_025075.4"/>
    <property type="RefSeq protein sequence ID" value="NP_079351.2"/>
</dbReference>
<dbReference type="UCSC" id="uc003dlt.6">
    <property type="organism name" value="human"/>
</dbReference>
<dbReference type="AGR" id="HGNC:29874"/>
<dbReference type="CTD" id="80145"/>
<dbReference type="DisGeNET" id="80145"/>
<dbReference type="GeneCards" id="THOC7"/>
<dbReference type="HGNC" id="HGNC:29874">
    <property type="gene designation" value="THOC7"/>
</dbReference>
<dbReference type="HPA" id="ENSG00000163634">
    <property type="expression patterns" value="Low tissue specificity"/>
</dbReference>
<dbReference type="MIM" id="611965">
    <property type="type" value="gene"/>
</dbReference>
<dbReference type="neXtProt" id="NX_Q6I9Y2"/>
<dbReference type="OpenTargets" id="ENSG00000163634"/>
<dbReference type="PharmGKB" id="PA144596266"/>
<dbReference type="VEuPathDB" id="HostDB:ENSG00000163634"/>
<dbReference type="eggNOG" id="KOG3215">
    <property type="taxonomic scope" value="Eukaryota"/>
</dbReference>
<dbReference type="GeneTree" id="ENSGT00390000002873"/>
<dbReference type="HOGENOM" id="CLU_087727_0_0_1"/>
<dbReference type="InParanoid" id="Q6I9Y2"/>
<dbReference type="OMA" id="WANSKND"/>
<dbReference type="OrthoDB" id="205166at2759"/>
<dbReference type="PAN-GO" id="Q6I9Y2">
    <property type="GO annotations" value="2 GO annotations based on evolutionary models"/>
</dbReference>
<dbReference type="PhylomeDB" id="Q6I9Y2"/>
<dbReference type="TreeFam" id="TF319308"/>
<dbReference type="PathwayCommons" id="Q6I9Y2"/>
<dbReference type="Reactome" id="R-HSA-159236">
    <property type="pathway name" value="Transport of Mature mRNA derived from an Intron-Containing Transcript"/>
</dbReference>
<dbReference type="Reactome" id="R-HSA-72187">
    <property type="pathway name" value="mRNA 3'-end processing"/>
</dbReference>
<dbReference type="Reactome" id="R-HSA-73856">
    <property type="pathway name" value="RNA Polymerase II Transcription Termination"/>
</dbReference>
<dbReference type="SignaLink" id="Q6I9Y2"/>
<dbReference type="SIGNOR" id="Q6I9Y2"/>
<dbReference type="BioGRID-ORCS" id="80145">
    <property type="hits" value="752 hits in 1165 CRISPR screens"/>
</dbReference>
<dbReference type="ChiTaRS" id="THOC7">
    <property type="organism name" value="human"/>
</dbReference>
<dbReference type="GenomeRNAi" id="80145"/>
<dbReference type="Pharos" id="Q6I9Y2">
    <property type="development level" value="Tbio"/>
</dbReference>
<dbReference type="PRO" id="PR:Q6I9Y2"/>
<dbReference type="Proteomes" id="UP000005640">
    <property type="component" value="Chromosome 3"/>
</dbReference>
<dbReference type="RNAct" id="Q6I9Y2">
    <property type="molecule type" value="protein"/>
</dbReference>
<dbReference type="Bgee" id="ENSG00000163634">
    <property type="expression patterns" value="Expressed in calcaneal tendon and 203 other cell types or tissues"/>
</dbReference>
<dbReference type="ExpressionAtlas" id="Q6I9Y2">
    <property type="expression patterns" value="baseline and differential"/>
</dbReference>
<dbReference type="GO" id="GO:0005737">
    <property type="term" value="C:cytoplasm"/>
    <property type="evidence" value="ECO:0000314"/>
    <property type="project" value="UniProtKB"/>
</dbReference>
<dbReference type="GO" id="GO:0005829">
    <property type="term" value="C:cytosol"/>
    <property type="evidence" value="ECO:0000314"/>
    <property type="project" value="HPA"/>
</dbReference>
<dbReference type="GO" id="GO:0016607">
    <property type="term" value="C:nuclear speck"/>
    <property type="evidence" value="ECO:0000314"/>
    <property type="project" value="HPA"/>
</dbReference>
<dbReference type="GO" id="GO:0005654">
    <property type="term" value="C:nucleoplasm"/>
    <property type="evidence" value="ECO:0000304"/>
    <property type="project" value="Reactome"/>
</dbReference>
<dbReference type="GO" id="GO:0005634">
    <property type="term" value="C:nucleus"/>
    <property type="evidence" value="ECO:0000314"/>
    <property type="project" value="UniProtKB"/>
</dbReference>
<dbReference type="GO" id="GO:0000347">
    <property type="term" value="C:THO complex"/>
    <property type="evidence" value="ECO:0000314"/>
    <property type="project" value="UniProtKB"/>
</dbReference>
<dbReference type="GO" id="GO:0000445">
    <property type="term" value="C:THO complex part of transcription export complex"/>
    <property type="evidence" value="ECO:0000314"/>
    <property type="project" value="UniProtKB"/>
</dbReference>
<dbReference type="GO" id="GO:0000346">
    <property type="term" value="C:transcription export complex"/>
    <property type="evidence" value="ECO:0000314"/>
    <property type="project" value="UniProtKB"/>
</dbReference>
<dbReference type="GO" id="GO:0003723">
    <property type="term" value="F:RNA binding"/>
    <property type="evidence" value="ECO:0007669"/>
    <property type="project" value="UniProtKB-KW"/>
</dbReference>
<dbReference type="GO" id="GO:0006406">
    <property type="term" value="P:mRNA export from nucleus"/>
    <property type="evidence" value="ECO:0000314"/>
    <property type="project" value="UniProtKB"/>
</dbReference>
<dbReference type="GO" id="GO:0006397">
    <property type="term" value="P:mRNA processing"/>
    <property type="evidence" value="ECO:0007669"/>
    <property type="project" value="UniProtKB-KW"/>
</dbReference>
<dbReference type="GO" id="GO:0008380">
    <property type="term" value="P:RNA splicing"/>
    <property type="evidence" value="ECO:0007669"/>
    <property type="project" value="UniProtKB-KW"/>
</dbReference>
<dbReference type="InterPro" id="IPR008501">
    <property type="entry name" value="THOC7/Mft1"/>
</dbReference>
<dbReference type="PANTHER" id="PTHR23405">
    <property type="entry name" value="MAINTENANCE OF KILLER 16 MAK16 PROTEIN-RELATED"/>
    <property type="match status" value="1"/>
</dbReference>
<dbReference type="PANTHER" id="PTHR23405:SF5">
    <property type="entry name" value="THO COMPLEX SUBUNIT 7 HOMOLOG"/>
    <property type="match status" value="1"/>
</dbReference>
<dbReference type="Pfam" id="PF05615">
    <property type="entry name" value="THOC7"/>
    <property type="match status" value="1"/>
</dbReference>
<comment type="function">
    <text evidence="3 4 5 8 10">Component of the THO subcomplex of the TREX complex which is thought to couple mRNA transcription, processing and nuclear export, and which specifically associates with spliced mRNA and not with unspliced pre-mRNA (PubMed:15833825, PubMed:15998806, PubMed:17190602). Required for efficient export of polyadenylated RNA (PubMed:23222130). Plays a key structural role in the oligomerization of the THO-DDX39B complex (PubMed:33191911). TREX is recruited to spliced mRNAs by a transcription-independent mechanism, binds to mRNA upstream of the exon-junction complex (EJC) and is recruited in a splicing- and cap-dependent manner to a region near the 5' end of the mRNA where it functions in mRNA export to the cytoplasm via the TAP/NXF1 pathway (PubMed:15833825, PubMed:15998806, PubMed:17190602).</text>
</comment>
<comment type="function">
    <text evidence="6">(Microbial infection) The TREX complex is essential for the export of Kaposi's sarcoma-associated herpesvirus (KSHV) intronless mRNAs and infectious virus production.</text>
</comment>
<comment type="subunit">
    <text evidence="2 3 4 7 8 10 11">Tetramer; as part of a THO-DDX39B complex (PubMed:33191911, PubMed:37020021). Component of the THO subcomplex, which is composed of THOC1, THOC2, THOC3, THOC5, THOC6 and THOC7 (PubMed:15833825, PubMed:15998806, PubMed:19059247, PubMed:33191911, PubMed:37020021). Component of the transcription/export (TREX) complex at least composed of ALYREF/THOC4, DDX39B, SARNP/CIP29, CHTOP and the THO subcomplex; in the complex interacts with THOC1, THOC2 and THOC5; forms a coiled-coil dimer with THOC5; together with THOC5 and THOC6, plays a key structural role in the oligomerization of the THO-DDX39B complex (PubMed:33191911, PubMed:37020021). TREX seems to have a dynamic structure involving ATP-dependent remodeling (PubMed:23222130, PubMed:37020021). Interacts with NIF3L1 (PubMed:12951069).</text>
</comment>
<comment type="interaction">
    <interactant intactId="EBI-716286">
        <id>Q6I9Y2</id>
    </interactant>
    <interactant intactId="EBI-10749669">
        <id>Q8IYE0</id>
        <label>CCDC146</label>
    </interactant>
    <organismsDiffer>false</organismsDiffer>
    <experiments>3</experiments>
</comment>
<comment type="interaction">
    <interactant intactId="EBI-716286">
        <id>Q6I9Y2</id>
    </interactant>
    <interactant intactId="EBI-743811">
        <id>Q8NEH6</id>
        <label>MNS1</label>
    </interactant>
    <organismsDiffer>false</organismsDiffer>
    <experiments>3</experiments>
</comment>
<comment type="interaction">
    <interactant intactId="EBI-716286">
        <id>Q6I9Y2</id>
    </interactant>
    <interactant intactId="EBI-715849">
        <id>O14777</id>
        <label>NDC80</label>
    </interactant>
    <organismsDiffer>false</organismsDiffer>
    <experiments>3</experiments>
</comment>
<comment type="interaction">
    <interactant intactId="EBI-716286">
        <id>Q6I9Y2</id>
    </interactant>
    <interactant intactId="EBI-358489">
        <id>Q96GM5</id>
        <label>SMARCD1</label>
    </interactant>
    <organismsDiffer>false</organismsDiffer>
    <experiments>3</experiments>
</comment>
<comment type="interaction">
    <interactant intactId="EBI-716286">
        <id>Q6I9Y2</id>
    </interactant>
    <interactant intactId="EBI-5280316">
        <id>Q13769</id>
        <label>THOC5</label>
    </interactant>
    <organismsDiffer>false</organismsDiffer>
    <experiments>9</experiments>
</comment>
<comment type="subcellular location">
    <subcellularLocation>
        <location evidence="2">Cytoplasm</location>
    </subcellularLocation>
    <subcellularLocation>
        <location evidence="2 7">Nucleus</location>
    </subcellularLocation>
    <subcellularLocation>
        <location evidence="13">Nucleus speckle</location>
    </subcellularLocation>
    <text evidence="7">Interaction with THOC5 is required for nuclear localization.</text>
</comment>
<comment type="similarity">
    <text evidence="13">Belongs to the THOC7 family.</text>
</comment>
<sequence>MGAVTDDEVIRKRLLIDGDGAGDDRRINLLVKSFIKWCNSGSQEEGYSQYQRMLSTLSQCEFSMGKTLLVYDMNLREMENYEKIYKEIECSIAGAHEKIAECKKQILQAKRIRKNRQEYDALAKVIQHHPDRHETLKELEALGKELEHLSHIKESVEDKLELRRKQFHVLLSTIHELQQTLENDEKLSEVEEAQEASMETDPKP</sequence>
<organism>
    <name type="scientific">Homo sapiens</name>
    <name type="common">Human</name>
    <dbReference type="NCBI Taxonomy" id="9606"/>
    <lineage>
        <taxon>Eukaryota</taxon>
        <taxon>Metazoa</taxon>
        <taxon>Chordata</taxon>
        <taxon>Craniata</taxon>
        <taxon>Vertebrata</taxon>
        <taxon>Euteleostomi</taxon>
        <taxon>Mammalia</taxon>
        <taxon>Eutheria</taxon>
        <taxon>Euarchontoglires</taxon>
        <taxon>Primates</taxon>
        <taxon>Haplorrhini</taxon>
        <taxon>Catarrhini</taxon>
        <taxon>Hominidae</taxon>
        <taxon>Homo</taxon>
    </lineage>
</organism>
<evidence type="ECO:0000256" key="1">
    <source>
        <dbReference type="SAM" id="MobiDB-lite"/>
    </source>
</evidence>
<evidence type="ECO:0000269" key="2">
    <source>
    </source>
</evidence>
<evidence type="ECO:0000269" key="3">
    <source>
    </source>
</evidence>
<evidence type="ECO:0000269" key="4">
    <source>
    </source>
</evidence>
<evidence type="ECO:0000269" key="5">
    <source>
    </source>
</evidence>
<evidence type="ECO:0000269" key="6">
    <source>
    </source>
</evidence>
<evidence type="ECO:0000269" key="7">
    <source>
    </source>
</evidence>
<evidence type="ECO:0000269" key="8">
    <source>
    </source>
</evidence>
<evidence type="ECO:0000269" key="9">
    <source>
    </source>
</evidence>
<evidence type="ECO:0000269" key="10">
    <source>
    </source>
</evidence>
<evidence type="ECO:0000269" key="11">
    <source>
    </source>
</evidence>
<evidence type="ECO:0000303" key="12">
    <source>
    </source>
</evidence>
<evidence type="ECO:0000305" key="13"/>
<evidence type="ECO:0007744" key="14">
    <source>
        <dbReference type="PDB" id="7APK"/>
    </source>
</evidence>
<evidence type="ECO:0007744" key="15">
    <source>
        <dbReference type="PDB" id="7ZNK"/>
    </source>
</evidence>
<evidence type="ECO:0007744" key="16">
    <source>
        <dbReference type="PDB" id="7ZNL"/>
    </source>
</evidence>
<evidence type="ECO:0007744" key="17">
    <source>
    </source>
</evidence>
<evidence type="ECO:0007744" key="18">
    <source>
    </source>
</evidence>
<evidence type="ECO:0007744" key="19">
    <source>
    </source>
</evidence>
<evidence type="ECO:0007829" key="20">
    <source>
        <dbReference type="PDB" id="7APK"/>
    </source>
</evidence>
<evidence type="ECO:0007829" key="21">
    <source>
        <dbReference type="PDB" id="7ZNL"/>
    </source>
</evidence>
<protein>
    <recommendedName>
        <fullName evidence="12">THO complex subunit 7</fullName>
    </recommendedName>
    <alternativeName>
        <fullName>Functional spliceosome-associated protein 24</fullName>
        <shortName>fSAP24</shortName>
    </alternativeName>
    <alternativeName>
        <fullName>Ngg1-interacting factor 3-like protein 1-binding protein 1</fullName>
        <shortName>NIF3L1-binding protein 1</shortName>
    </alternativeName>
    <alternativeName>
        <fullName>hTREX30</fullName>
    </alternativeName>
</protein>
<keyword id="KW-0002">3D-structure</keyword>
<keyword id="KW-0007">Acetylation</keyword>
<keyword id="KW-0175">Coiled coil</keyword>
<keyword id="KW-0963">Cytoplasm</keyword>
<keyword id="KW-0507">mRNA processing</keyword>
<keyword id="KW-0508">mRNA splicing</keyword>
<keyword id="KW-0509">mRNA transport</keyword>
<keyword id="KW-0539">Nucleus</keyword>
<keyword id="KW-0597">Phosphoprotein</keyword>
<keyword id="KW-1267">Proteomics identification</keyword>
<keyword id="KW-1185">Reference proteome</keyword>
<keyword id="KW-0694">RNA-binding</keyword>
<keyword id="KW-0813">Transport</keyword>
<feature type="initiator methionine" description="Removed" evidence="9 17">
    <location>
        <position position="1"/>
    </location>
</feature>
<feature type="chain" id="PRO_0000310754" description="THO complex subunit 7">
    <location>
        <begin position="2"/>
        <end position="204"/>
    </location>
</feature>
<feature type="region of interest" description="Interaction with THOC5" evidence="7">
    <location>
        <begin position="50"/>
        <end position="137"/>
    </location>
</feature>
<feature type="region of interest" description="Interaction with NIF3L1" evidence="2">
    <location>
        <begin position="105"/>
        <end position="204"/>
    </location>
</feature>
<feature type="region of interest" description="Disordered" evidence="1">
    <location>
        <begin position="182"/>
        <end position="204"/>
    </location>
</feature>
<feature type="coiled-coil region" evidence="10 11 14 15 16">
    <location>
        <begin position="146"/>
        <end position="204"/>
    </location>
</feature>
<feature type="modified residue" description="N-acetylglycine" evidence="9 17">
    <location>
        <position position="2"/>
    </location>
</feature>
<feature type="modified residue" description="Phosphothreonine" evidence="19">
    <location>
        <position position="5"/>
    </location>
</feature>
<feature type="modified residue" description="N6-acetyllysine" evidence="18">
    <location>
        <position position="36"/>
    </location>
</feature>
<feature type="sequence conflict" description="In Ref. 1; BAB15656." evidence="13" ref="1">
    <original>D</original>
    <variation>G</variation>
    <location>
        <position position="23"/>
    </location>
</feature>
<feature type="sequence conflict" description="In Ref. 2; CAG33654." evidence="13" ref="2">
    <original>L</original>
    <variation>P</variation>
    <location>
        <position position="187"/>
    </location>
</feature>
<feature type="sequence conflict" description="In Ref. 1; BAB15656 and 2; CAG33654." evidence="13" ref="1 2">
    <original>T</original>
    <variation>S</variation>
    <location>
        <position position="200"/>
    </location>
</feature>
<feature type="helix" evidence="21">
    <location>
        <begin position="7"/>
        <end position="12"/>
    </location>
</feature>
<feature type="helix" evidence="20">
    <location>
        <begin position="22"/>
        <end position="38"/>
    </location>
</feature>
<feature type="helix" evidence="20">
    <location>
        <begin position="47"/>
        <end position="126"/>
    </location>
</feature>
<feature type="helix" evidence="20">
    <location>
        <begin position="133"/>
        <end position="180"/>
    </location>
</feature>
<gene>
    <name type="primary">THOC7</name>
    <name type="synonym">NIF3L1BP1</name>
</gene>
<accession>Q6I9Y2</accession>
<accession>Q6P1L3</accession>
<accession>Q8WUF2</accession>
<accession>Q9H5H0</accession>
<reference key="1">
    <citation type="journal article" date="2004" name="Nat. Genet.">
        <title>Complete sequencing and characterization of 21,243 full-length human cDNAs.</title>
        <authorList>
            <person name="Ota T."/>
            <person name="Suzuki Y."/>
            <person name="Nishikawa T."/>
            <person name="Otsuki T."/>
            <person name="Sugiyama T."/>
            <person name="Irie R."/>
            <person name="Wakamatsu A."/>
            <person name="Hayashi K."/>
            <person name="Sato H."/>
            <person name="Nagai K."/>
            <person name="Kimura K."/>
            <person name="Makita H."/>
            <person name="Sekine M."/>
            <person name="Obayashi M."/>
            <person name="Nishi T."/>
            <person name="Shibahara T."/>
            <person name="Tanaka T."/>
            <person name="Ishii S."/>
            <person name="Yamamoto J."/>
            <person name="Saito K."/>
            <person name="Kawai Y."/>
            <person name="Isono Y."/>
            <person name="Nakamura Y."/>
            <person name="Nagahari K."/>
            <person name="Murakami K."/>
            <person name="Yasuda T."/>
            <person name="Iwayanagi T."/>
            <person name="Wagatsuma M."/>
            <person name="Shiratori A."/>
            <person name="Sudo H."/>
            <person name="Hosoiri T."/>
            <person name="Kaku Y."/>
            <person name="Kodaira H."/>
            <person name="Kondo H."/>
            <person name="Sugawara M."/>
            <person name="Takahashi M."/>
            <person name="Kanda K."/>
            <person name="Yokoi T."/>
            <person name="Furuya T."/>
            <person name="Kikkawa E."/>
            <person name="Omura Y."/>
            <person name="Abe K."/>
            <person name="Kamihara K."/>
            <person name="Katsuta N."/>
            <person name="Sato K."/>
            <person name="Tanikawa M."/>
            <person name="Yamazaki M."/>
            <person name="Ninomiya K."/>
            <person name="Ishibashi T."/>
            <person name="Yamashita H."/>
            <person name="Murakawa K."/>
            <person name="Fujimori K."/>
            <person name="Tanai H."/>
            <person name="Kimata M."/>
            <person name="Watanabe M."/>
            <person name="Hiraoka S."/>
            <person name="Chiba Y."/>
            <person name="Ishida S."/>
            <person name="Ono Y."/>
            <person name="Takiguchi S."/>
            <person name="Watanabe S."/>
            <person name="Yosida M."/>
            <person name="Hotuta T."/>
            <person name="Kusano J."/>
            <person name="Kanehori K."/>
            <person name="Takahashi-Fujii A."/>
            <person name="Hara H."/>
            <person name="Tanase T.-O."/>
            <person name="Nomura Y."/>
            <person name="Togiya S."/>
            <person name="Komai F."/>
            <person name="Hara R."/>
            <person name="Takeuchi K."/>
            <person name="Arita M."/>
            <person name="Imose N."/>
            <person name="Musashino K."/>
            <person name="Yuuki H."/>
            <person name="Oshima A."/>
            <person name="Sasaki N."/>
            <person name="Aotsuka S."/>
            <person name="Yoshikawa Y."/>
            <person name="Matsunawa H."/>
            <person name="Ichihara T."/>
            <person name="Shiohata N."/>
            <person name="Sano S."/>
            <person name="Moriya S."/>
            <person name="Momiyama H."/>
            <person name="Satoh N."/>
            <person name="Takami S."/>
            <person name="Terashima Y."/>
            <person name="Suzuki O."/>
            <person name="Nakagawa S."/>
            <person name="Senoh A."/>
            <person name="Mizoguchi H."/>
            <person name="Goto Y."/>
            <person name="Shimizu F."/>
            <person name="Wakebe H."/>
            <person name="Hishigaki H."/>
            <person name="Watanabe T."/>
            <person name="Sugiyama A."/>
            <person name="Takemoto M."/>
            <person name="Kawakami B."/>
            <person name="Yamazaki M."/>
            <person name="Watanabe K."/>
            <person name="Kumagai A."/>
            <person name="Itakura S."/>
            <person name="Fukuzumi Y."/>
            <person name="Fujimori Y."/>
            <person name="Komiyama M."/>
            <person name="Tashiro H."/>
            <person name="Tanigami A."/>
            <person name="Fujiwara T."/>
            <person name="Ono T."/>
            <person name="Yamada K."/>
            <person name="Fujii Y."/>
            <person name="Ozaki K."/>
            <person name="Hirao M."/>
            <person name="Ohmori Y."/>
            <person name="Kawabata A."/>
            <person name="Hikiji T."/>
            <person name="Kobatake N."/>
            <person name="Inagaki H."/>
            <person name="Ikema Y."/>
            <person name="Okamoto S."/>
            <person name="Okitani R."/>
            <person name="Kawakami T."/>
            <person name="Noguchi S."/>
            <person name="Itoh T."/>
            <person name="Shigeta K."/>
            <person name="Senba T."/>
            <person name="Matsumura K."/>
            <person name="Nakajima Y."/>
            <person name="Mizuno T."/>
            <person name="Morinaga M."/>
            <person name="Sasaki M."/>
            <person name="Togashi T."/>
            <person name="Oyama M."/>
            <person name="Hata H."/>
            <person name="Watanabe M."/>
            <person name="Komatsu T."/>
            <person name="Mizushima-Sugano J."/>
            <person name="Satoh T."/>
            <person name="Shirai Y."/>
            <person name="Takahashi Y."/>
            <person name="Nakagawa K."/>
            <person name="Okumura K."/>
            <person name="Nagase T."/>
            <person name="Nomura N."/>
            <person name="Kikuchi H."/>
            <person name="Masuho Y."/>
            <person name="Yamashita R."/>
            <person name="Nakai K."/>
            <person name="Yada T."/>
            <person name="Nakamura Y."/>
            <person name="Ohara O."/>
            <person name="Isogai T."/>
            <person name="Sugano S."/>
        </authorList>
    </citation>
    <scope>NUCLEOTIDE SEQUENCE [LARGE SCALE MRNA]</scope>
    <source>
        <tissue>Small intestine</tissue>
    </source>
</reference>
<reference key="2">
    <citation type="submission" date="2004-06" db="EMBL/GenBank/DDBJ databases">
        <title>Cloning of human full open reading frames in Gateway(TM) system entry vector (pDONR201).</title>
        <authorList>
            <person name="Ebert L."/>
            <person name="Schick M."/>
            <person name="Neubert P."/>
            <person name="Schatten R."/>
            <person name="Henze S."/>
            <person name="Korn B."/>
        </authorList>
    </citation>
    <scope>NUCLEOTIDE SEQUENCE [LARGE SCALE MRNA]</scope>
</reference>
<reference key="3">
    <citation type="journal article" date="2006" name="Nature">
        <title>The DNA sequence, annotation and analysis of human chromosome 3.</title>
        <authorList>
            <person name="Muzny D.M."/>
            <person name="Scherer S.E."/>
            <person name="Kaul R."/>
            <person name="Wang J."/>
            <person name="Yu J."/>
            <person name="Sudbrak R."/>
            <person name="Buhay C.J."/>
            <person name="Chen R."/>
            <person name="Cree A."/>
            <person name="Ding Y."/>
            <person name="Dugan-Rocha S."/>
            <person name="Gill R."/>
            <person name="Gunaratne P."/>
            <person name="Harris R.A."/>
            <person name="Hawes A.C."/>
            <person name="Hernandez J."/>
            <person name="Hodgson A.V."/>
            <person name="Hume J."/>
            <person name="Jackson A."/>
            <person name="Khan Z.M."/>
            <person name="Kovar-Smith C."/>
            <person name="Lewis L.R."/>
            <person name="Lozado R.J."/>
            <person name="Metzker M.L."/>
            <person name="Milosavljevic A."/>
            <person name="Miner G.R."/>
            <person name="Morgan M.B."/>
            <person name="Nazareth L.V."/>
            <person name="Scott G."/>
            <person name="Sodergren E."/>
            <person name="Song X.-Z."/>
            <person name="Steffen D."/>
            <person name="Wei S."/>
            <person name="Wheeler D.A."/>
            <person name="Wright M.W."/>
            <person name="Worley K.C."/>
            <person name="Yuan Y."/>
            <person name="Zhang Z."/>
            <person name="Adams C.Q."/>
            <person name="Ansari-Lari M.A."/>
            <person name="Ayele M."/>
            <person name="Brown M.J."/>
            <person name="Chen G."/>
            <person name="Chen Z."/>
            <person name="Clendenning J."/>
            <person name="Clerc-Blankenburg K.P."/>
            <person name="Chen R."/>
            <person name="Chen Z."/>
            <person name="Davis C."/>
            <person name="Delgado O."/>
            <person name="Dinh H.H."/>
            <person name="Dong W."/>
            <person name="Draper H."/>
            <person name="Ernst S."/>
            <person name="Fu G."/>
            <person name="Gonzalez-Garay M.L."/>
            <person name="Garcia D.K."/>
            <person name="Gillett W."/>
            <person name="Gu J."/>
            <person name="Hao B."/>
            <person name="Haugen E."/>
            <person name="Havlak P."/>
            <person name="He X."/>
            <person name="Hennig S."/>
            <person name="Hu S."/>
            <person name="Huang W."/>
            <person name="Jackson L.R."/>
            <person name="Jacob L.S."/>
            <person name="Kelly S.H."/>
            <person name="Kube M."/>
            <person name="Levy R."/>
            <person name="Li Z."/>
            <person name="Liu B."/>
            <person name="Liu J."/>
            <person name="Liu W."/>
            <person name="Lu J."/>
            <person name="Maheshwari M."/>
            <person name="Nguyen B.-V."/>
            <person name="Okwuonu G.O."/>
            <person name="Palmeiri A."/>
            <person name="Pasternak S."/>
            <person name="Perez L.M."/>
            <person name="Phelps K.A."/>
            <person name="Plopper F.J."/>
            <person name="Qiang B."/>
            <person name="Raymond C."/>
            <person name="Rodriguez R."/>
            <person name="Saenphimmachak C."/>
            <person name="Santibanez J."/>
            <person name="Shen H."/>
            <person name="Shen Y."/>
            <person name="Subramanian S."/>
            <person name="Tabor P.E."/>
            <person name="Verduzco D."/>
            <person name="Waldron L."/>
            <person name="Wang J."/>
            <person name="Wang J."/>
            <person name="Wang Q."/>
            <person name="Williams G.A."/>
            <person name="Wong G.K.-S."/>
            <person name="Yao Z."/>
            <person name="Zhang J."/>
            <person name="Zhang X."/>
            <person name="Zhao G."/>
            <person name="Zhou J."/>
            <person name="Zhou Y."/>
            <person name="Nelson D."/>
            <person name="Lehrach H."/>
            <person name="Reinhardt R."/>
            <person name="Naylor S.L."/>
            <person name="Yang H."/>
            <person name="Olson M."/>
            <person name="Weinstock G."/>
            <person name="Gibbs R.A."/>
        </authorList>
    </citation>
    <scope>NUCLEOTIDE SEQUENCE [LARGE SCALE GENOMIC DNA]</scope>
</reference>
<reference key="4">
    <citation type="submission" date="2005-07" db="EMBL/GenBank/DDBJ databases">
        <authorList>
            <person name="Mural R.J."/>
            <person name="Istrail S."/>
            <person name="Sutton G.G."/>
            <person name="Florea L."/>
            <person name="Halpern A.L."/>
            <person name="Mobarry C.M."/>
            <person name="Lippert R."/>
            <person name="Walenz B."/>
            <person name="Shatkay H."/>
            <person name="Dew I."/>
            <person name="Miller J.R."/>
            <person name="Flanigan M.J."/>
            <person name="Edwards N.J."/>
            <person name="Bolanos R."/>
            <person name="Fasulo D."/>
            <person name="Halldorsson B.V."/>
            <person name="Hannenhalli S."/>
            <person name="Turner R."/>
            <person name="Yooseph S."/>
            <person name="Lu F."/>
            <person name="Nusskern D.R."/>
            <person name="Shue B.C."/>
            <person name="Zheng X.H."/>
            <person name="Zhong F."/>
            <person name="Delcher A.L."/>
            <person name="Huson D.H."/>
            <person name="Kravitz S.A."/>
            <person name="Mouchard L."/>
            <person name="Reinert K."/>
            <person name="Remington K.A."/>
            <person name="Clark A.G."/>
            <person name="Waterman M.S."/>
            <person name="Eichler E.E."/>
            <person name="Adams M.D."/>
            <person name="Hunkapiller M.W."/>
            <person name="Myers E.W."/>
            <person name="Venter J.C."/>
        </authorList>
    </citation>
    <scope>NUCLEOTIDE SEQUENCE [LARGE SCALE GENOMIC DNA]</scope>
</reference>
<reference key="5">
    <citation type="journal article" date="2004" name="Genome Res.">
        <title>The status, quality, and expansion of the NIH full-length cDNA project: the Mammalian Gene Collection (MGC).</title>
        <authorList>
            <consortium name="The MGC Project Team"/>
        </authorList>
    </citation>
    <scope>NUCLEOTIDE SEQUENCE [LARGE SCALE MRNA]</scope>
    <source>
        <tissue>Skin</tissue>
        <tissue>Testis</tissue>
    </source>
</reference>
<reference key="6">
    <citation type="journal article" date="2003" name="Biochem. Biophys. Res. Commun.">
        <title>Identification and characterization of NIF3L1 BP1, a novel cytoplasmic interaction partner of the NIF3L1 protein.</title>
        <authorList>
            <person name="Tascou S."/>
            <person name="Kang T.W."/>
            <person name="Trappe R."/>
            <person name="Engel W."/>
            <person name="Burfeind P."/>
        </authorList>
    </citation>
    <scope>INTERACTION WITH NIF3L1</scope>
    <scope>REGION</scope>
    <scope>SUBCELLULAR LOCATION</scope>
</reference>
<reference key="7">
    <citation type="journal article" date="2005" name="Cancer Res.">
        <title>Linking transcriptional elongation and messenger RNA export to metastatic breast cancers.</title>
        <authorList>
            <person name="Guo S."/>
            <person name="Hakimi M.A."/>
            <person name="Baillat D."/>
            <person name="Chen X."/>
            <person name="Farber M.J."/>
            <person name="Klein-Szanto A.J."/>
            <person name="Cooch N.S."/>
            <person name="Godwin A.K."/>
            <person name="Shiekhattar R."/>
        </authorList>
    </citation>
    <scope>IDENTIFICATION IN THE TREX COMPLEX</scope>
    <scope>FUNCTION OF THE TREX COMPLEX</scope>
    <scope>IDENTIFICATION BY MASS SPECTROMETRY</scope>
</reference>
<reference key="8">
    <citation type="journal article" date="2005" name="Genes Dev.">
        <title>Recruitment of the human TREX complex to mRNA during splicing.</title>
        <authorList>
            <person name="Masuda S."/>
            <person name="Das R."/>
            <person name="Cheng H."/>
            <person name="Hurt E."/>
            <person name="Dorman N."/>
            <person name="Reed R."/>
        </authorList>
    </citation>
    <scope>IDENTIFICATION IN THE THO AND TREX COMPLEX</scope>
    <scope>FUNCTION OF THE TREX COMPLEX</scope>
    <scope>IDENTIFICATION BY MASS SPECTROMETRY</scope>
</reference>
<reference key="9">
    <citation type="journal article" date="2006" name="Cell">
        <title>Human mRNA export machinery recruited to the 5' end of mRNA.</title>
        <authorList>
            <person name="Cheng H."/>
            <person name="Dufu K."/>
            <person name="Lee C.-S."/>
            <person name="Hsu J.L."/>
            <person name="Dias A."/>
            <person name="Reed R."/>
        </authorList>
    </citation>
    <scope>FUNCTION OF THE TREX COMPLEX</scope>
</reference>
<reference key="10">
    <citation type="journal article" date="2008" name="PLoS Pathog.">
        <title>Recruitment of the complete hTREX complex is required for Kaposi's sarcoma-associated herpesvirus intronless mRNA nuclear export and virus replication.</title>
        <authorList>
            <person name="Boyne J.R."/>
            <person name="Colgan K.J."/>
            <person name="Whitehouse A."/>
        </authorList>
    </citation>
    <scope>FUNCTION OF THE TREX COMPLEX (MICROBIAL INFECTION)</scope>
</reference>
<reference key="11">
    <citation type="journal article" date="2009" name="Anal. Chem.">
        <title>Lys-N and trypsin cover complementary parts of the phosphoproteome in a refined SCX-based approach.</title>
        <authorList>
            <person name="Gauci S."/>
            <person name="Helbig A.O."/>
            <person name="Slijper M."/>
            <person name="Krijgsveld J."/>
            <person name="Heck A.J."/>
            <person name="Mohammed S."/>
        </authorList>
    </citation>
    <scope>ACETYLATION [LARGE SCALE ANALYSIS] AT GLY-2</scope>
    <scope>CLEAVAGE OF INITIATOR METHIONINE [LARGE SCALE ANALYSIS]</scope>
    <scope>IDENTIFICATION BY MASS SPECTROMETRY [LARGE SCALE ANALYSIS]</scope>
</reference>
<reference key="12">
    <citation type="journal article" date="2009" name="FEBS Lett.">
        <title>Nuclear localization of the pre-mRNA associating protein THOC7 depends upon its direct interaction with Fms tyrosine kinase interacting protein (FMIP).</title>
        <authorList>
            <person name="El Bounkari O."/>
            <person name="Guria A."/>
            <person name="Klebba-Faerber S."/>
            <person name="Claussen M."/>
            <person name="Pieler T."/>
            <person name="Griffiths J.R."/>
            <person name="Whetton A.D."/>
            <person name="Koch A."/>
            <person name="Tamura T."/>
        </authorList>
    </citation>
    <scope>SUBCELLULAR LOCATION</scope>
    <scope>INTERACTION WITH THOC5</scope>
</reference>
<reference key="13">
    <citation type="journal article" date="2009" name="Science">
        <title>Lysine acetylation targets protein complexes and co-regulates major cellular functions.</title>
        <authorList>
            <person name="Choudhary C."/>
            <person name="Kumar C."/>
            <person name="Gnad F."/>
            <person name="Nielsen M.L."/>
            <person name="Rehman M."/>
            <person name="Walther T.C."/>
            <person name="Olsen J.V."/>
            <person name="Mann M."/>
        </authorList>
    </citation>
    <scope>ACETYLATION [LARGE SCALE ANALYSIS] AT LYS-36</scope>
    <scope>IDENTIFICATION BY MASS SPECTROMETRY [LARGE SCALE ANALYSIS]</scope>
</reference>
<reference key="14">
    <citation type="journal article" date="2011" name="BMC Syst. Biol.">
        <title>Initial characterization of the human central proteome.</title>
        <authorList>
            <person name="Burkard T.R."/>
            <person name="Planyavsky M."/>
            <person name="Kaupe I."/>
            <person name="Breitwieser F.P."/>
            <person name="Buerckstuemmer T."/>
            <person name="Bennett K.L."/>
            <person name="Superti-Furga G."/>
            <person name="Colinge J."/>
        </authorList>
    </citation>
    <scope>IDENTIFICATION BY MASS SPECTROMETRY [LARGE SCALE ANALYSIS]</scope>
</reference>
<reference key="15">
    <citation type="journal article" date="2013" name="J. Proteome Res.">
        <title>Toward a comprehensive characterization of a human cancer cell phosphoproteome.</title>
        <authorList>
            <person name="Zhou H."/>
            <person name="Di Palma S."/>
            <person name="Preisinger C."/>
            <person name="Peng M."/>
            <person name="Polat A.N."/>
            <person name="Heck A.J."/>
            <person name="Mohammed S."/>
        </authorList>
    </citation>
    <scope>PHOSPHORYLATION [LARGE SCALE ANALYSIS] AT THR-5</scope>
    <scope>IDENTIFICATION BY MASS SPECTROMETRY [LARGE SCALE ANALYSIS]</scope>
    <source>
        <tissue>Erythroleukemia</tissue>
    </source>
</reference>
<reference key="16">
    <citation type="journal article" date="2013" name="Nucleic Acids Res.">
        <title>Aly and THO are required for assembly of the human TREX complex and association of TREX components with the spliced mRNA.</title>
        <authorList>
            <person name="Chi B."/>
            <person name="Wang Q."/>
            <person name="Wu G."/>
            <person name="Tan M."/>
            <person name="Wang L."/>
            <person name="Shi M."/>
            <person name="Chang X."/>
            <person name="Cheng H."/>
        </authorList>
    </citation>
    <scope>FUNCTION</scope>
</reference>
<reference key="17">
    <citation type="journal article" date="2015" name="Hum. Mol. Genet.">
        <title>Biochemical and cellular analysis of Ogden syndrome reveals downstream Nt-acetylation defects.</title>
        <authorList>
            <person name="Myklebust L.M."/>
            <person name="Van Damme P."/>
            <person name="Stoeve S.I."/>
            <person name="Doerfel M.J."/>
            <person name="Abboud A."/>
            <person name="Kalvik T.V."/>
            <person name="Grauffel C."/>
            <person name="Jonckheere V."/>
            <person name="Wu Y."/>
            <person name="Swensen J."/>
            <person name="Kaasa H."/>
            <person name="Liszczak G."/>
            <person name="Marmorstein R."/>
            <person name="Reuter N."/>
            <person name="Lyon G.J."/>
            <person name="Gevaert K."/>
            <person name="Arnesen T."/>
        </authorList>
    </citation>
    <scope>ACETYLATION AT GLY-2</scope>
    <scope>CLEAVAGE OF INITIATOR METHIONINE</scope>
</reference>
<reference evidence="14" key="18">
    <citation type="journal article" date="2020" name="Elife">
        <title>Structure of the human core transcription-export complex reveals a hub for multivalent interactions.</title>
        <authorList>
            <person name="Puehringer T."/>
            <person name="Hohmann U."/>
            <person name="Fin L."/>
            <person name="Pacheco-Fiallos B."/>
            <person name="Schellhaas U."/>
            <person name="Brennecke J."/>
            <person name="Plaschka C."/>
        </authorList>
    </citation>
    <scope>STRUCTURE BY ELECTRON MICROSCOPY (3.30 ANGSTROMS) IN THO-DDX39B COMPLEX</scope>
    <scope>FUNCTION</scope>
    <scope>SUBUNIT</scope>
</reference>
<reference evidence="15 16" key="19">
    <citation type="journal article" date="2023" name="Nature">
        <title>mRNA recognition and packaging by the human transcription-export complex.</title>
        <authorList>
            <person name="Pacheco-Fiallos B."/>
            <person name="Vorlander M.K."/>
            <person name="Riabov-Bassat D."/>
            <person name="Fin L."/>
            <person name="O'Reilly F.J."/>
            <person name="Ayala F.I."/>
            <person name="Schellhaas U."/>
            <person name="Rappsilber J."/>
            <person name="Plaschka C."/>
        </authorList>
    </citation>
    <scope>STRUCTURE BY ELECTRON MICROSCOPY (3.45 ANGSTROMS) IN TREX COMPLEX</scope>
    <scope>SUBUNIT</scope>
</reference>